<organism>
    <name type="scientific">Macrothele gigas</name>
    <name type="common">Japanese funnel web spider</name>
    <dbReference type="NCBI Taxonomy" id="223896"/>
    <lineage>
        <taxon>Eukaryota</taxon>
        <taxon>Metazoa</taxon>
        <taxon>Ecdysozoa</taxon>
        <taxon>Arthropoda</taxon>
        <taxon>Chelicerata</taxon>
        <taxon>Arachnida</taxon>
        <taxon>Araneae</taxon>
        <taxon>Mygalomorphae</taxon>
        <taxon>Macrothelidae</taxon>
        <taxon>Macrothele</taxon>
    </lineage>
</organism>
<dbReference type="EMBL" id="AB121195">
    <property type="protein sequence ID" value="BAD13402.1"/>
    <property type="molecule type" value="mRNA"/>
</dbReference>
<dbReference type="ArachnoServer" id="AS000387">
    <property type="toxin name" value="U8-hexatoxin-Mg1a"/>
</dbReference>
<dbReference type="GO" id="GO:0005576">
    <property type="term" value="C:extracellular region"/>
    <property type="evidence" value="ECO:0007669"/>
    <property type="project" value="UniProtKB-SubCell"/>
</dbReference>
<dbReference type="GO" id="GO:0090729">
    <property type="term" value="F:toxin activity"/>
    <property type="evidence" value="ECO:0007669"/>
    <property type="project" value="UniProtKB-KW"/>
</dbReference>
<sequence>MKVFSFTIGLVVIISLFAFALAYDEETDLMKKLVEMERAIEQRIICAPEGGPCVVGIGCCKGYSCAPGLLGLVGHCQ</sequence>
<protein>
    <recommendedName>
        <fullName>U8-hexatoxin-Mg1a</fullName>
        <shortName>U8-HXTX-Mg1a</shortName>
    </recommendedName>
    <alternativeName>
        <fullName>Neurotoxin magi-7</fullName>
    </alternativeName>
</protein>
<comment type="function">
    <text evidence="3">Intrathorax injection into crickets causes paralysis prolonged for more than 60 minutes, followed by recovery.</text>
</comment>
<comment type="subcellular location">
    <subcellularLocation>
        <location>Secreted</location>
    </subcellularLocation>
</comment>
<comment type="tissue specificity">
    <text>Expressed by the venom gland.</text>
</comment>
<comment type="domain">
    <text evidence="1">The presence of a 'disulfide through disulfide knot' structurally defines this protein as a knottin.</text>
</comment>
<comment type="mass spectrometry"/>
<comment type="similarity">
    <text>Belongs to the neurotoxin 14 (magi-1) family. 05 (ICK-7) subfamily.</text>
</comment>
<accession>Q75WH6</accession>
<proteinExistence type="evidence at protein level"/>
<feature type="signal peptide" evidence="2">
    <location>
        <begin position="1"/>
        <end position="22"/>
    </location>
</feature>
<feature type="propeptide" id="PRO_0000285705">
    <location>
        <begin position="23"/>
        <end position="43"/>
    </location>
</feature>
<feature type="chain" id="PRO_0000285706" description="U8-hexatoxin-Mg1a">
    <location>
        <begin position="44"/>
        <end position="77"/>
    </location>
</feature>
<feature type="disulfide bond" evidence="1">
    <location>
        <begin position="46"/>
        <end position="60"/>
    </location>
</feature>
<feature type="disulfide bond" evidence="1">
    <location>
        <begin position="53"/>
        <end position="65"/>
    </location>
</feature>
<feature type="disulfide bond" evidence="1">
    <location>
        <begin position="59"/>
        <end position="76"/>
    </location>
</feature>
<keyword id="KW-1015">Disulfide bond</keyword>
<keyword id="KW-0960">Knottin</keyword>
<keyword id="KW-0528">Neurotoxin</keyword>
<keyword id="KW-0964">Secreted</keyword>
<keyword id="KW-0732">Signal</keyword>
<keyword id="KW-0800">Toxin</keyword>
<evidence type="ECO:0000250" key="1"/>
<evidence type="ECO:0000255" key="2"/>
<evidence type="ECO:0000269" key="3">
    <source>
    </source>
</evidence>
<reference key="1">
    <citation type="journal article" date="2004" name="Toxicon">
        <title>Rapid and efficient identification of cysteine-rich peptides by random screening of a venom gland cDNA library from the hexathelid spider Macrothele gigas.</title>
        <authorList>
            <person name="Satake H."/>
            <person name="Villegas E."/>
            <person name="Oshiro N."/>
            <person name="Terada K."/>
            <person name="Shinada T."/>
            <person name="Corzo G."/>
        </authorList>
    </citation>
    <scope>NUCLEOTIDE SEQUENCE [MRNA]</scope>
    <scope>FUNCTION</scope>
    <scope>MASS SPECTROMETRY</scope>
    <source>
        <tissue>Venom</tissue>
        <tissue>Venom gland</tissue>
    </source>
</reference>
<name>TXMG7_MACGS</name>